<proteinExistence type="evidence at protein level"/>
<accession>Q5SSM3</accession>
<accession>Q5SSM4</accession>
<accession>Q5SSM6</accession>
<accession>Q5SSM7</accession>
<accession>Q7TNB9</accession>
<accession>Q8BW90</accession>
<gene>
    <name evidence="13" type="primary">Arhgap44</name>
    <name evidence="11" type="synonym">Rich2</name>
</gene>
<name>RHG44_MOUSE</name>
<feature type="chain" id="PRO_0000280481" description="Rho GTPase-activating protein 44">
    <location>
        <begin position="1"/>
        <end position="814"/>
    </location>
</feature>
<feature type="domain" description="BAR" evidence="4">
    <location>
        <begin position="14"/>
        <end position="249"/>
    </location>
</feature>
<feature type="domain" description="Rho-GAP" evidence="3">
    <location>
        <begin position="255"/>
        <end position="445"/>
    </location>
</feature>
<feature type="region of interest" description="Disordered" evidence="5">
    <location>
        <begin position="467"/>
        <end position="493"/>
    </location>
</feature>
<feature type="region of interest" description="Disordered" evidence="5">
    <location>
        <begin position="528"/>
        <end position="769"/>
    </location>
</feature>
<feature type="region of interest" description="Interaction with BST2" evidence="1">
    <location>
        <begin position="727"/>
        <end position="814"/>
    </location>
</feature>
<feature type="region of interest" description="Disordered" evidence="5">
    <location>
        <begin position="784"/>
        <end position="814"/>
    </location>
</feature>
<feature type="short sequence motif" description="PDZ-binding" evidence="12">
    <location>
        <begin position="811"/>
        <end position="814"/>
    </location>
</feature>
<feature type="compositionally biased region" description="Basic and acidic residues" evidence="5">
    <location>
        <begin position="479"/>
        <end position="489"/>
    </location>
</feature>
<feature type="compositionally biased region" description="Low complexity" evidence="5">
    <location>
        <begin position="567"/>
        <end position="581"/>
    </location>
</feature>
<feature type="compositionally biased region" description="Low complexity" evidence="5">
    <location>
        <begin position="598"/>
        <end position="612"/>
    </location>
</feature>
<feature type="compositionally biased region" description="Low complexity" evidence="5">
    <location>
        <begin position="622"/>
        <end position="637"/>
    </location>
</feature>
<feature type="compositionally biased region" description="Low complexity" evidence="5">
    <location>
        <begin position="684"/>
        <end position="704"/>
    </location>
</feature>
<feature type="compositionally biased region" description="Low complexity" evidence="5">
    <location>
        <begin position="741"/>
        <end position="752"/>
    </location>
</feature>
<feature type="compositionally biased region" description="Basic and acidic residues" evidence="5">
    <location>
        <begin position="790"/>
        <end position="805"/>
    </location>
</feature>
<feature type="site" description="Arginine finger; crucial for GTP hydrolysis by stabilizing the transition state" evidence="3">
    <location>
        <position position="291"/>
    </location>
</feature>
<feature type="modified residue" description="Phosphoserine" evidence="14">
    <location>
        <position position="493"/>
    </location>
</feature>
<feature type="modified residue" description="Phosphoserine" evidence="2">
    <location>
        <position position="805"/>
    </location>
</feature>
<feature type="splice variant" id="VSP_023737" description="In isoform 4." evidence="10">
    <original>MKKQFNRMRQLANQTVGR</original>
    <variation>MELPGLELVRPSWVRAGRW</variation>
    <location>
        <begin position="1"/>
        <end position="18"/>
    </location>
</feature>
<feature type="splice variant" id="VSP_023738" description="In isoform 4." evidence="10">
    <original>DQLSADMYSFVAKEID</original>
    <variation>VPVPLALLSRDRLRSP</variation>
    <location>
        <begin position="195"/>
        <end position="210"/>
    </location>
</feature>
<feature type="splice variant" id="VSP_023739" description="In isoform 4." evidence="10">
    <location>
        <begin position="211"/>
        <end position="814"/>
    </location>
</feature>
<feature type="splice variant" id="VSP_023740" description="In isoform 2." evidence="9">
    <location>
        <begin position="509"/>
        <end position="514"/>
    </location>
</feature>
<feature type="splice variant" id="VSP_023741" description="In isoform 2 and isoform 3." evidence="9">
    <original>DLVHFDVPSIHIELGSTLRLSPLEHARRHSATDKRDSEEESESTAL</original>
    <variation>AV</variation>
    <location>
        <begin position="769"/>
        <end position="814"/>
    </location>
</feature>
<feature type="mutagenesis site" description="Reduces GRIA1 recycling. Abolishes the increase of spine density and size, as well as reduces the increase of GRIA1 expression in surface associated with long-term potentiation." evidence="6">
    <original>R</original>
    <variation>A</variation>
    <location>
        <position position="291"/>
    </location>
</feature>
<organism>
    <name type="scientific">Mus musculus</name>
    <name type="common">Mouse</name>
    <dbReference type="NCBI Taxonomy" id="10090"/>
    <lineage>
        <taxon>Eukaryota</taxon>
        <taxon>Metazoa</taxon>
        <taxon>Chordata</taxon>
        <taxon>Craniata</taxon>
        <taxon>Vertebrata</taxon>
        <taxon>Euteleostomi</taxon>
        <taxon>Mammalia</taxon>
        <taxon>Eutheria</taxon>
        <taxon>Euarchontoglires</taxon>
        <taxon>Glires</taxon>
        <taxon>Rodentia</taxon>
        <taxon>Myomorpha</taxon>
        <taxon>Muroidea</taxon>
        <taxon>Muridae</taxon>
        <taxon>Murinae</taxon>
        <taxon>Mus</taxon>
        <taxon>Mus</taxon>
    </lineage>
</organism>
<evidence type="ECO:0000250" key="1"/>
<evidence type="ECO:0000250" key="2">
    <source>
        <dbReference type="UniProtKB" id="F1LQX4"/>
    </source>
</evidence>
<evidence type="ECO:0000255" key="3">
    <source>
        <dbReference type="PROSITE-ProRule" id="PRU00172"/>
    </source>
</evidence>
<evidence type="ECO:0000255" key="4">
    <source>
        <dbReference type="PROSITE-ProRule" id="PRU00361"/>
    </source>
</evidence>
<evidence type="ECO:0000256" key="5">
    <source>
        <dbReference type="SAM" id="MobiDB-lite"/>
    </source>
</evidence>
<evidence type="ECO:0000269" key="6">
    <source>
    </source>
</evidence>
<evidence type="ECO:0000269" key="7">
    <source>
    </source>
</evidence>
<evidence type="ECO:0000269" key="8">
    <source>
    </source>
</evidence>
<evidence type="ECO:0000303" key="9">
    <source>
    </source>
</evidence>
<evidence type="ECO:0000303" key="10">
    <source>
    </source>
</evidence>
<evidence type="ECO:0000303" key="11">
    <source>
    </source>
</evidence>
<evidence type="ECO:0000305" key="12"/>
<evidence type="ECO:0000312" key="13">
    <source>
        <dbReference type="MGI" id="MGI:2144423"/>
    </source>
</evidence>
<evidence type="ECO:0007744" key="14">
    <source>
    </source>
</evidence>
<protein>
    <recommendedName>
        <fullName evidence="12">Rho GTPase-activating protein 44</fullName>
    </recommendedName>
    <alternativeName>
        <fullName evidence="11">Rho-type GTPase-activating protein RICH2</fullName>
    </alternativeName>
    <alternativeName>
        <fullName>RhoGAP interacting with CIP4 homologs protein 2</fullName>
        <shortName>RICH-2</shortName>
    </alternativeName>
</protein>
<reference key="1">
    <citation type="journal article" date="2005" name="Science">
        <title>The transcriptional landscape of the mammalian genome.</title>
        <authorList>
            <person name="Carninci P."/>
            <person name="Kasukawa T."/>
            <person name="Katayama S."/>
            <person name="Gough J."/>
            <person name="Frith M.C."/>
            <person name="Maeda N."/>
            <person name="Oyama R."/>
            <person name="Ravasi T."/>
            <person name="Lenhard B."/>
            <person name="Wells C."/>
            <person name="Kodzius R."/>
            <person name="Shimokawa K."/>
            <person name="Bajic V.B."/>
            <person name="Brenner S.E."/>
            <person name="Batalov S."/>
            <person name="Forrest A.R."/>
            <person name="Zavolan M."/>
            <person name="Davis M.J."/>
            <person name="Wilming L.G."/>
            <person name="Aidinis V."/>
            <person name="Allen J.E."/>
            <person name="Ambesi-Impiombato A."/>
            <person name="Apweiler R."/>
            <person name="Aturaliya R.N."/>
            <person name="Bailey T.L."/>
            <person name="Bansal M."/>
            <person name="Baxter L."/>
            <person name="Beisel K.W."/>
            <person name="Bersano T."/>
            <person name="Bono H."/>
            <person name="Chalk A.M."/>
            <person name="Chiu K.P."/>
            <person name="Choudhary V."/>
            <person name="Christoffels A."/>
            <person name="Clutterbuck D.R."/>
            <person name="Crowe M.L."/>
            <person name="Dalla E."/>
            <person name="Dalrymple B.P."/>
            <person name="de Bono B."/>
            <person name="Della Gatta G."/>
            <person name="di Bernardo D."/>
            <person name="Down T."/>
            <person name="Engstrom P."/>
            <person name="Fagiolini M."/>
            <person name="Faulkner G."/>
            <person name="Fletcher C.F."/>
            <person name="Fukushima T."/>
            <person name="Furuno M."/>
            <person name="Futaki S."/>
            <person name="Gariboldi M."/>
            <person name="Georgii-Hemming P."/>
            <person name="Gingeras T.R."/>
            <person name="Gojobori T."/>
            <person name="Green R.E."/>
            <person name="Gustincich S."/>
            <person name="Harbers M."/>
            <person name="Hayashi Y."/>
            <person name="Hensch T.K."/>
            <person name="Hirokawa N."/>
            <person name="Hill D."/>
            <person name="Huminiecki L."/>
            <person name="Iacono M."/>
            <person name="Ikeo K."/>
            <person name="Iwama A."/>
            <person name="Ishikawa T."/>
            <person name="Jakt M."/>
            <person name="Kanapin A."/>
            <person name="Katoh M."/>
            <person name="Kawasawa Y."/>
            <person name="Kelso J."/>
            <person name="Kitamura H."/>
            <person name="Kitano H."/>
            <person name="Kollias G."/>
            <person name="Krishnan S.P."/>
            <person name="Kruger A."/>
            <person name="Kummerfeld S.K."/>
            <person name="Kurochkin I.V."/>
            <person name="Lareau L.F."/>
            <person name="Lazarevic D."/>
            <person name="Lipovich L."/>
            <person name="Liu J."/>
            <person name="Liuni S."/>
            <person name="McWilliam S."/>
            <person name="Madan Babu M."/>
            <person name="Madera M."/>
            <person name="Marchionni L."/>
            <person name="Matsuda H."/>
            <person name="Matsuzawa S."/>
            <person name="Miki H."/>
            <person name="Mignone F."/>
            <person name="Miyake S."/>
            <person name="Morris K."/>
            <person name="Mottagui-Tabar S."/>
            <person name="Mulder N."/>
            <person name="Nakano N."/>
            <person name="Nakauchi H."/>
            <person name="Ng P."/>
            <person name="Nilsson R."/>
            <person name="Nishiguchi S."/>
            <person name="Nishikawa S."/>
            <person name="Nori F."/>
            <person name="Ohara O."/>
            <person name="Okazaki Y."/>
            <person name="Orlando V."/>
            <person name="Pang K.C."/>
            <person name="Pavan W.J."/>
            <person name="Pavesi G."/>
            <person name="Pesole G."/>
            <person name="Petrovsky N."/>
            <person name="Piazza S."/>
            <person name="Reed J."/>
            <person name="Reid J.F."/>
            <person name="Ring B.Z."/>
            <person name="Ringwald M."/>
            <person name="Rost B."/>
            <person name="Ruan Y."/>
            <person name="Salzberg S.L."/>
            <person name="Sandelin A."/>
            <person name="Schneider C."/>
            <person name="Schoenbach C."/>
            <person name="Sekiguchi K."/>
            <person name="Semple C.A."/>
            <person name="Seno S."/>
            <person name="Sessa L."/>
            <person name="Sheng Y."/>
            <person name="Shibata Y."/>
            <person name="Shimada H."/>
            <person name="Shimada K."/>
            <person name="Silva D."/>
            <person name="Sinclair B."/>
            <person name="Sperling S."/>
            <person name="Stupka E."/>
            <person name="Sugiura K."/>
            <person name="Sultana R."/>
            <person name="Takenaka Y."/>
            <person name="Taki K."/>
            <person name="Tammoja K."/>
            <person name="Tan S.L."/>
            <person name="Tang S."/>
            <person name="Taylor M.S."/>
            <person name="Tegner J."/>
            <person name="Teichmann S.A."/>
            <person name="Ueda H.R."/>
            <person name="van Nimwegen E."/>
            <person name="Verardo R."/>
            <person name="Wei C.L."/>
            <person name="Yagi K."/>
            <person name="Yamanishi H."/>
            <person name="Zabarovsky E."/>
            <person name="Zhu S."/>
            <person name="Zimmer A."/>
            <person name="Hide W."/>
            <person name="Bult C."/>
            <person name="Grimmond S.M."/>
            <person name="Teasdale R.D."/>
            <person name="Liu E.T."/>
            <person name="Brusic V."/>
            <person name="Quackenbush J."/>
            <person name="Wahlestedt C."/>
            <person name="Mattick J.S."/>
            <person name="Hume D.A."/>
            <person name="Kai C."/>
            <person name="Sasaki D."/>
            <person name="Tomaru Y."/>
            <person name="Fukuda S."/>
            <person name="Kanamori-Katayama M."/>
            <person name="Suzuki M."/>
            <person name="Aoki J."/>
            <person name="Arakawa T."/>
            <person name="Iida J."/>
            <person name="Imamura K."/>
            <person name="Itoh M."/>
            <person name="Kato T."/>
            <person name="Kawaji H."/>
            <person name="Kawagashira N."/>
            <person name="Kawashima T."/>
            <person name="Kojima M."/>
            <person name="Kondo S."/>
            <person name="Konno H."/>
            <person name="Nakano K."/>
            <person name="Ninomiya N."/>
            <person name="Nishio T."/>
            <person name="Okada M."/>
            <person name="Plessy C."/>
            <person name="Shibata K."/>
            <person name="Shiraki T."/>
            <person name="Suzuki S."/>
            <person name="Tagami M."/>
            <person name="Waki K."/>
            <person name="Watahiki A."/>
            <person name="Okamura-Oho Y."/>
            <person name="Suzuki H."/>
            <person name="Kawai J."/>
            <person name="Hayashizaki Y."/>
        </authorList>
    </citation>
    <scope>NUCLEOTIDE SEQUENCE [LARGE SCALE MRNA] (ISOFORM 4)</scope>
    <source>
        <strain>C57BL/6J</strain>
        <tissue>Lung</tissue>
    </source>
</reference>
<reference key="2">
    <citation type="journal article" date="2009" name="PLoS Biol.">
        <title>Lineage-specific biology revealed by a finished genome assembly of the mouse.</title>
        <authorList>
            <person name="Church D.M."/>
            <person name="Goodstadt L."/>
            <person name="Hillier L.W."/>
            <person name="Zody M.C."/>
            <person name="Goldstein S."/>
            <person name="She X."/>
            <person name="Bult C.J."/>
            <person name="Agarwala R."/>
            <person name="Cherry J.L."/>
            <person name="DiCuccio M."/>
            <person name="Hlavina W."/>
            <person name="Kapustin Y."/>
            <person name="Meric P."/>
            <person name="Maglott D."/>
            <person name="Birtle Z."/>
            <person name="Marques A.C."/>
            <person name="Graves T."/>
            <person name="Zhou S."/>
            <person name="Teague B."/>
            <person name="Potamousis K."/>
            <person name="Churas C."/>
            <person name="Place M."/>
            <person name="Herschleb J."/>
            <person name="Runnheim R."/>
            <person name="Forrest D."/>
            <person name="Amos-Landgraf J."/>
            <person name="Schwartz D.C."/>
            <person name="Cheng Z."/>
            <person name="Lindblad-Toh K."/>
            <person name="Eichler E.E."/>
            <person name="Ponting C.P."/>
        </authorList>
    </citation>
    <scope>NUCLEOTIDE SEQUENCE [LARGE SCALE GENOMIC DNA]</scope>
    <source>
        <strain>C57BL/6J</strain>
    </source>
</reference>
<reference key="3">
    <citation type="journal article" date="2004" name="Genome Res.">
        <title>The status, quality, and expansion of the NIH full-length cDNA project: the Mammalian Gene Collection (MGC).</title>
        <authorList>
            <consortium name="The MGC Project Team"/>
        </authorList>
    </citation>
    <scope>NUCLEOTIDE SEQUENCE [LARGE SCALE MRNA] (ISOFORM 2)</scope>
    <source>
        <strain>C57BL/6J</strain>
        <tissue>Brain</tissue>
    </source>
</reference>
<reference key="4">
    <citation type="journal article" date="2010" name="Cell">
        <title>A tissue-specific atlas of mouse protein phosphorylation and expression.</title>
        <authorList>
            <person name="Huttlin E.L."/>
            <person name="Jedrychowski M.P."/>
            <person name="Elias J.E."/>
            <person name="Goswami T."/>
            <person name="Rad R."/>
            <person name="Beausoleil S.A."/>
            <person name="Villen J."/>
            <person name="Haas W."/>
            <person name="Sowa M.E."/>
            <person name="Gygi S.P."/>
        </authorList>
    </citation>
    <scope>PHOSPHORYLATION [LARGE SCALE ANALYSIS] AT SER-493</scope>
    <scope>IDENTIFICATION BY MASS SPECTROMETRY [LARGE SCALE ANALYSIS]</scope>
    <source>
        <tissue>Brain</tissue>
        <tissue>Lung</tissue>
        <tissue>Pancreas</tissue>
    </source>
</reference>
<reference key="5">
    <citation type="journal article" date="2013" name="J. Neurosci.">
        <title>Shank3-Rich2 interaction regulates AMPA receptor recycling and synaptic long-term potentiation.</title>
        <authorList>
            <person name="Raynaud F."/>
            <person name="Janossy A."/>
            <person name="Dahl J."/>
            <person name="Bertaso F."/>
            <person name="Perroy J."/>
            <person name="Varrault A."/>
            <person name="Vidal M."/>
            <person name="Worley P.F."/>
            <person name="Boeckers T.M."/>
            <person name="Bockaert J."/>
            <person name="Marin P."/>
            <person name="Fagni L."/>
            <person name="Homburger V."/>
        </authorList>
    </citation>
    <scope>FUNCTION IN LONG-TERM POTENTIATION</scope>
    <scope>DOMAIN</scope>
    <scope>INTERACTION WITH SHANK3</scope>
    <scope>SUBCELLULAR LOCATION</scope>
    <scope>TISSUE SPECIFICITY</scope>
    <scope>MUTAGENESIS OF ARG-291</scope>
</reference>
<reference key="6">
    <citation type="journal article" date="2014" name="J. Biol. Chem.">
        <title>Rho-GTPase-activating protein interacting with Cdc-42-interacting protein 4 homolog 2 (Rich2): a new Ras-related C3 botulinum toxin substrate 1 (Rac1) GTPase-activating protein that controls dendritic spine morphogenesis.</title>
        <authorList>
            <person name="Raynaud F."/>
            <person name="Moutin E."/>
            <person name="Schmidt S."/>
            <person name="Dahl J."/>
            <person name="Bertaso F."/>
            <person name="Boeckers T.M."/>
            <person name="Homburger V."/>
            <person name="Fagni L."/>
        </authorList>
    </citation>
    <scope>FUNCTION</scope>
    <scope>SUBCELLULAR LOCATION</scope>
    <scope>TISSUE SPECIFICITY</scope>
</reference>
<reference key="7">
    <citation type="journal article" date="2016" name="Mol. Brain">
        <title>Enlarged dendritic spines and pronounced neophobia in mice lacking the PSD protein RICH2.</title>
        <authorList>
            <person name="Sarowar T."/>
            <person name="Grabrucker S."/>
            <person name="Foehr K."/>
            <person name="Mangus K."/>
            <person name="Eckert M."/>
            <person name="Bockmann J."/>
            <person name="Boeckers T.M."/>
            <person name="Grabrucker A.M."/>
        </authorList>
    </citation>
    <scope>FUNCTION</scope>
    <scope>DISRUPTION PHENOTYPE</scope>
    <scope>TISSUE SPECIFICITY</scope>
</reference>
<keyword id="KW-0025">Alternative splicing</keyword>
<keyword id="KW-0966">Cell projection</keyword>
<keyword id="KW-0967">Endosome</keyword>
<keyword id="KW-0343">GTPase activation</keyword>
<keyword id="KW-0597">Phosphoprotein</keyword>
<keyword id="KW-1185">Reference proteome</keyword>
<keyword id="KW-0770">Synapse</keyword>
<comment type="function">
    <text evidence="2 6 7 8">GTPase-activating protein (GAP) that stimulates the GTPase activity of Rho-type GTPases. Thereby, controls Rho-type GTPases cycling between their active GTP-bound and inactive GDP-bound states. Acts as a GAP at least for CDC42 and RAC1 (PubMed:24352656, PubMed:26969129). In neurons, is involved in dendritic spine formation and synaptic plasticity in a specific RAC1-GAP activity (PubMed:23739967, PubMed:24352656, PubMed:26969129). Limits the initiation of exploratory dendritic filopodia. Recruited to actin-patches that seed filopodia, binds specifically to plasma membrane sections that are deformed inward by acto-myosin mediated contractile forces. Acts through GAP activity on RAC1 to reduce actin polymerization necessary for filopodia formation (By similarity). In association with SHANK3, promotes GRIA1 exocytosis from recycling endosomes and spine morphological changes associated to long-term potentiation (PubMed:23739967).</text>
</comment>
<comment type="subunit">
    <text evidence="6">Interacts with BST2 (via cytoplasmic domain). Interacts (probably via PDZ-binding motif) with SHANK3 (via PDZ domain); the interaction takes place in dendritic spines and promotes GRIA1 exocytosis.</text>
</comment>
<comment type="subcellular location">
    <subcellularLocation>
        <location evidence="6 7">Cell projection</location>
        <location evidence="6 7">Dendritic spine</location>
    </subcellularLocation>
    <subcellularLocation>
        <location evidence="6">Recycling endosome</location>
    </subcellularLocation>
    <subcellularLocation>
        <location evidence="6">Presynapse</location>
    </subcellularLocation>
    <subcellularLocation>
        <location evidence="2">Cell projection</location>
        <location evidence="2">Dendrite</location>
    </subcellularLocation>
    <text evidence="2 6">In CA1 hippocampal synapses, detected at both presynaptic and postsynaptic sites (PubMed:23739967). Located in convoluted dendritic plasma membrane sections enriched in polymerized actin and myosin (patches) along dendrites where often emerge filopodia (By similarity).</text>
</comment>
<comment type="alternative products">
    <event type="alternative splicing"/>
    <isoform>
        <id>Q5SSM3-1</id>
        <name>1</name>
        <sequence type="displayed"/>
    </isoform>
    <isoform>
        <id>Q5SSM3-2</id>
        <name>2</name>
        <sequence type="described" ref="VSP_023740 VSP_023741"/>
    </isoform>
    <isoform>
        <id>Q5SSM3-3</id>
        <name>3</name>
        <sequence type="described" ref="VSP_023741"/>
    </isoform>
    <isoform>
        <id>Q5SSM3-4</id>
        <name>4</name>
        <sequence type="described" ref="VSP_023737 VSP_023738 VSP_023739"/>
    </isoform>
</comment>
<comment type="tissue specificity">
    <text evidence="6 7 8">Specifically expressed in brain (at protein level) (PubMed:26969129). Detected in olfactory bulb, cortex, hippocampus, diencephalon and cerebellum (at protein level) (PubMed:26969129). Expressed in hippocampal neurons (at protein level).</text>
</comment>
<comment type="domain">
    <text evidence="2 6">Rho-GAP domain is required to promote GRIA1 exocytosis from recycling endosomes. Rho-GAP and BAR domains are necessary for the control of long-term potentiation in hippocampal neurons (PubMed:23739967). In dendrites, BAR domain mediates the recruitment to patches where plasma membrane is deformed by acto-myosin mediated contractile forces (By similarity).</text>
</comment>
<comment type="disruption phenotype">
    <text evidence="8">Mutants display a selective and highly significant fear of novel objects and increased stereotypic behavior as well as impairment of motor learning (PubMed:26969129). They show a nicrease in multiple synapses in the hippocampus and cerebellum (PubMed:26969129).</text>
</comment>
<comment type="miscellaneous">
    <molecule>Isoform 2</molecule>
    <text evidence="12">Contains a PDZ-binding motif at positions 761-764.</text>
</comment>
<comment type="miscellaneous">
    <molecule>Isoform 3</molecule>
    <text evidence="12">Contains a PDZ-binding motif at positions 767-770.</text>
</comment>
<comment type="sequence caution" evidence="12">
    <conflict type="frameshift">
        <sequence resource="EMBL-CDS" id="BAC35316"/>
    </conflict>
</comment>
<comment type="sequence caution" evidence="12">
    <conflict type="erroneous gene model prediction">
        <sequence resource="EMBL-CDS" id="CAI24614"/>
    </conflict>
</comment>
<comment type="sequence caution" evidence="12">
    <molecule>Isoform 4</molecule>
    <conflict type="frameshift">
        <sequence resource="EMBL-CDS" id="BAC35316"/>
    </conflict>
</comment>
<sequence>MKKQFNRMRQLANQTVGRAEKTEVLSEDLLQVEKRLELVKQVSHSTHKKLTACLQGQQGAEADKRSKKLPLTTLAQCLVEGSAILGDDTLLGKMLKLCGETEDKLAQELIHFELQVERDVIEPLFLLAEVEIPNIQKQRKHLAKLVLDMDSSRTRWQQTSKSSGLSSSLQPAGAKADALREEMEEAANRVEICRDQLSADMYSFVAKEIDYANYFQTLIEVQAEYHRKSLTLLQAVLPQIKAQQEAWVEKPSFGKPLEEHLMISGREIAFPIEACVTMLLECGMQEEGLFRVAPSASKLKKLKAALDCCVVDVQEYSADPHAIAGALKSYLRELPEPLMTFELYDEWIQASNIQEQDKRLQALWNACEKLPKANHNNIKYLIKFLSKLSEYQDVNKMTPSNMAIVLGPNLLWPQSEGNITEMMTTVSLQIVGIIEPIIQHADWFFPGEIEFNLTGSYGSPVHVNHNANYSSMPSPDMDPADRRQPEQARRPLSVATDNMMLEFYKKDGLRKIQSMGVRVMDTSWVARRGSSAGRKASCAPPSMQPPAPPSELAAPLPSPLPEQVPDSPATPAPALSPSGASLQPTPERPSVSKSKELSPGSGQKGSPGSIQGTPCPGTQLGPQPAASPSQLPADQSPHTLRKVSKKVAPIPPKVPFVQPGTVSDQPVGQPSPVSLSPTPPSTPSPYGLSYPPGYSMASGQLSPASAPPLASPSVFTSTLAKSRPTPKPRQRPTLPPPQPPSVSLSASSPQSTEHPMLDGMSPGESMSTDLVHFDVPSIHIELGSTLRLSPLEHARRHSATDKRDSEEESESTAL</sequence>
<dbReference type="EMBL" id="AK053220">
    <property type="protein sequence ID" value="BAC35316.1"/>
    <property type="status" value="ALT_FRAME"/>
    <property type="molecule type" value="mRNA"/>
</dbReference>
<dbReference type="EMBL" id="AL663045">
    <property type="protein sequence ID" value="CAI24613.2"/>
    <property type="molecule type" value="Genomic_DNA"/>
</dbReference>
<dbReference type="EMBL" id="AL663045">
    <property type="protein sequence ID" value="CAI24614.1"/>
    <property type="status" value="ALT_SEQ"/>
    <property type="molecule type" value="Genomic_DNA"/>
</dbReference>
<dbReference type="EMBL" id="AL663045">
    <property type="protein sequence ID" value="CAI24616.1"/>
    <property type="molecule type" value="Genomic_DNA"/>
</dbReference>
<dbReference type="EMBL" id="AL663045">
    <property type="protein sequence ID" value="CAI24617.1"/>
    <property type="molecule type" value="Genomic_DNA"/>
</dbReference>
<dbReference type="EMBL" id="BC056366">
    <property type="protein sequence ID" value="AAH56366.1"/>
    <property type="molecule type" value="mRNA"/>
</dbReference>
<dbReference type="EMBL" id="BC059911">
    <property type="protein sequence ID" value="AAH59911.1"/>
    <property type="molecule type" value="mRNA"/>
</dbReference>
<dbReference type="CCDS" id="CCDS36180.1">
    <molecule id="Q5SSM3-2"/>
</dbReference>
<dbReference type="RefSeq" id="NP_001092758.1">
    <property type="nucleotide sequence ID" value="NM_001099288.1"/>
</dbReference>
<dbReference type="RefSeq" id="NP_001395152.1">
    <molecule id="Q5SSM3-1"/>
    <property type="nucleotide sequence ID" value="NM_001408223.1"/>
</dbReference>
<dbReference type="RefSeq" id="NP_001395153.1">
    <molecule id="Q5SSM3-3"/>
    <property type="nucleotide sequence ID" value="NM_001408224.1"/>
</dbReference>
<dbReference type="RefSeq" id="NP_778168.2">
    <molecule id="Q5SSM3-2"/>
    <property type="nucleotide sequence ID" value="NM_175003.3"/>
</dbReference>
<dbReference type="RefSeq" id="XP_006532934.1">
    <property type="nucleotide sequence ID" value="XM_006532871.3"/>
</dbReference>
<dbReference type="RefSeq" id="XP_006532935.1">
    <property type="nucleotide sequence ID" value="XM_006532872.3"/>
</dbReference>
<dbReference type="SMR" id="Q5SSM3"/>
<dbReference type="BioGRID" id="229799">
    <property type="interactions" value="9"/>
</dbReference>
<dbReference type="FunCoup" id="Q5SSM3">
    <property type="interactions" value="858"/>
</dbReference>
<dbReference type="IntAct" id="Q5SSM3">
    <property type="interactions" value="3"/>
</dbReference>
<dbReference type="MINT" id="Q5SSM3"/>
<dbReference type="STRING" id="10090.ENSMUSP00000039139"/>
<dbReference type="GlyGen" id="Q5SSM3">
    <property type="glycosylation" value="6 sites, 1 N-linked glycan (1 site), 1 O-linked glycan (1 site)"/>
</dbReference>
<dbReference type="iPTMnet" id="Q5SSM3"/>
<dbReference type="PhosphoSitePlus" id="Q5SSM3"/>
<dbReference type="SwissPalm" id="Q5SSM3"/>
<dbReference type="jPOST" id="Q5SSM3"/>
<dbReference type="PaxDb" id="10090-ENSMUSP00000039139"/>
<dbReference type="PeptideAtlas" id="Q5SSM3"/>
<dbReference type="ProteomicsDB" id="254970">
    <molecule id="Q5SSM3-1"/>
</dbReference>
<dbReference type="ProteomicsDB" id="254971">
    <molecule id="Q5SSM3-2"/>
</dbReference>
<dbReference type="ProteomicsDB" id="254972">
    <molecule id="Q5SSM3-3"/>
</dbReference>
<dbReference type="ProteomicsDB" id="254973">
    <molecule id="Q5SSM3-4"/>
</dbReference>
<dbReference type="Antibodypedia" id="47980">
    <property type="antibodies" value="114 antibodies from 21 providers"/>
</dbReference>
<dbReference type="DNASU" id="216831"/>
<dbReference type="Ensembl" id="ENSMUST00000047463.15">
    <molecule id="Q5SSM3-2"/>
    <property type="protein sequence ID" value="ENSMUSP00000039139.9"/>
    <property type="gene ID" value="ENSMUSG00000033389.17"/>
</dbReference>
<dbReference type="Ensembl" id="ENSMUST00000093001.5">
    <molecule id="Q5SSM3-4"/>
    <property type="protein sequence ID" value="ENSMUSP00000090680.5"/>
    <property type="gene ID" value="ENSMUSG00000033389.17"/>
</dbReference>
<dbReference type="Ensembl" id="ENSMUST00000093002.12">
    <molecule id="Q5SSM3-1"/>
    <property type="protein sequence ID" value="ENSMUSP00000090681.6"/>
    <property type="gene ID" value="ENSMUSG00000033389.17"/>
</dbReference>
<dbReference type="GeneID" id="216831"/>
<dbReference type="KEGG" id="mmu:216831"/>
<dbReference type="UCSC" id="uc007jku.1">
    <molecule id="Q5SSM3-2"/>
    <property type="organism name" value="mouse"/>
</dbReference>
<dbReference type="UCSC" id="uc007jkv.1">
    <molecule id="Q5SSM3-1"/>
    <property type="organism name" value="mouse"/>
</dbReference>
<dbReference type="UCSC" id="uc007jkw.1">
    <molecule id="Q5SSM3-4"/>
    <property type="organism name" value="mouse"/>
</dbReference>
<dbReference type="AGR" id="MGI:2144423"/>
<dbReference type="CTD" id="9912"/>
<dbReference type="MGI" id="MGI:2144423">
    <property type="gene designation" value="Arhgap44"/>
</dbReference>
<dbReference type="VEuPathDB" id="HostDB:ENSMUSG00000033389"/>
<dbReference type="eggNOG" id="KOG4270">
    <property type="taxonomic scope" value="Eukaryota"/>
</dbReference>
<dbReference type="GeneTree" id="ENSGT00940000157296"/>
<dbReference type="HOGENOM" id="CLU_013806_0_0_1"/>
<dbReference type="InParanoid" id="Q5SSM3"/>
<dbReference type="OMA" id="SDWIQAS"/>
<dbReference type="OrthoDB" id="19923at2759"/>
<dbReference type="PhylomeDB" id="Q5SSM3"/>
<dbReference type="TreeFam" id="TF316514"/>
<dbReference type="Reactome" id="R-MMU-8980692">
    <property type="pathway name" value="RHOA GTPase cycle"/>
</dbReference>
<dbReference type="Reactome" id="R-MMU-9013148">
    <property type="pathway name" value="CDC42 GTPase cycle"/>
</dbReference>
<dbReference type="Reactome" id="R-MMU-9013149">
    <property type="pathway name" value="RAC1 GTPase cycle"/>
</dbReference>
<dbReference type="BioGRID-ORCS" id="216831">
    <property type="hits" value="5 hits in 78 CRISPR screens"/>
</dbReference>
<dbReference type="CD-CODE" id="CE726F99">
    <property type="entry name" value="Postsynaptic density"/>
</dbReference>
<dbReference type="ChiTaRS" id="Arhgap44">
    <property type="organism name" value="mouse"/>
</dbReference>
<dbReference type="PRO" id="PR:Q5SSM3"/>
<dbReference type="Proteomes" id="UP000000589">
    <property type="component" value="Chromosome 11"/>
</dbReference>
<dbReference type="RNAct" id="Q5SSM3">
    <property type="molecule type" value="protein"/>
</dbReference>
<dbReference type="Bgee" id="ENSMUSG00000033389">
    <property type="expression patterns" value="Expressed in medial vestibular nucleus and 214 other cell types or tissues"/>
</dbReference>
<dbReference type="ExpressionAtlas" id="Q5SSM3">
    <property type="expression patterns" value="baseline and differential"/>
</dbReference>
<dbReference type="GO" id="GO:0030425">
    <property type="term" value="C:dendrite"/>
    <property type="evidence" value="ECO:0000250"/>
    <property type="project" value="UniProtKB"/>
</dbReference>
<dbReference type="GO" id="GO:0043197">
    <property type="term" value="C:dendritic spine"/>
    <property type="evidence" value="ECO:0000314"/>
    <property type="project" value="ARUK-UCL"/>
</dbReference>
<dbReference type="GO" id="GO:0098978">
    <property type="term" value="C:glutamatergic synapse"/>
    <property type="evidence" value="ECO:0000314"/>
    <property type="project" value="SynGO"/>
</dbReference>
<dbReference type="GO" id="GO:0031256">
    <property type="term" value="C:leading edge membrane"/>
    <property type="evidence" value="ECO:0007669"/>
    <property type="project" value="Ensembl"/>
</dbReference>
<dbReference type="GO" id="GO:0014069">
    <property type="term" value="C:postsynaptic density"/>
    <property type="evidence" value="ECO:0007669"/>
    <property type="project" value="Ensembl"/>
</dbReference>
<dbReference type="GO" id="GO:0048786">
    <property type="term" value="C:presynaptic active zone"/>
    <property type="evidence" value="ECO:0007669"/>
    <property type="project" value="Ensembl"/>
</dbReference>
<dbReference type="GO" id="GO:0055037">
    <property type="term" value="C:recycling endosome"/>
    <property type="evidence" value="ECO:0007669"/>
    <property type="project" value="UniProtKB-SubCell"/>
</dbReference>
<dbReference type="GO" id="GO:0005096">
    <property type="term" value="F:GTPase activator activity"/>
    <property type="evidence" value="ECO:0000314"/>
    <property type="project" value="ARUK-UCL"/>
</dbReference>
<dbReference type="GO" id="GO:0005543">
    <property type="term" value="F:phospholipid binding"/>
    <property type="evidence" value="ECO:0007669"/>
    <property type="project" value="Ensembl"/>
</dbReference>
<dbReference type="GO" id="GO:0031267">
    <property type="term" value="F:small GTPase binding"/>
    <property type="evidence" value="ECO:0000353"/>
    <property type="project" value="ARUK-UCL"/>
</dbReference>
<dbReference type="GO" id="GO:0099010">
    <property type="term" value="P:modification of postsynaptic structure"/>
    <property type="evidence" value="ECO:0000314"/>
    <property type="project" value="SynGO"/>
</dbReference>
<dbReference type="GO" id="GO:0050804">
    <property type="term" value="P:modulation of chemical synaptic transmission"/>
    <property type="evidence" value="ECO:0000314"/>
    <property type="project" value="SynGO"/>
</dbReference>
<dbReference type="GO" id="GO:0051490">
    <property type="term" value="P:negative regulation of filopodium assembly"/>
    <property type="evidence" value="ECO:0000250"/>
    <property type="project" value="UniProtKB"/>
</dbReference>
<dbReference type="GO" id="GO:0035021">
    <property type="term" value="P:negative regulation of Rac protein signal transduction"/>
    <property type="evidence" value="ECO:0000315"/>
    <property type="project" value="ARUK-UCL"/>
</dbReference>
<dbReference type="GO" id="GO:0061001">
    <property type="term" value="P:regulation of dendritic spine morphogenesis"/>
    <property type="evidence" value="ECO:0000315"/>
    <property type="project" value="ARUK-UCL"/>
</dbReference>
<dbReference type="GO" id="GO:0043087">
    <property type="term" value="P:regulation of GTPase activity"/>
    <property type="evidence" value="ECO:0000250"/>
    <property type="project" value="UniProtKB"/>
</dbReference>
<dbReference type="GO" id="GO:0099152">
    <property type="term" value="P:regulation of neurotransmitter receptor transport, endosome to postsynaptic membrane"/>
    <property type="evidence" value="ECO:0000314"/>
    <property type="project" value="SynGO"/>
</dbReference>
<dbReference type="GO" id="GO:0007165">
    <property type="term" value="P:signal transduction"/>
    <property type="evidence" value="ECO:0007669"/>
    <property type="project" value="InterPro"/>
</dbReference>
<dbReference type="CDD" id="cd07619">
    <property type="entry name" value="BAR_Rich2"/>
    <property type="match status" value="1"/>
</dbReference>
<dbReference type="FunFam" id="1.10.555.10:FF:000001">
    <property type="entry name" value="Rho GTPase activating protein 44"/>
    <property type="match status" value="1"/>
</dbReference>
<dbReference type="FunFam" id="1.20.1270.60:FF:000018">
    <property type="entry name" value="Rho GTPase activating protein 44"/>
    <property type="match status" value="1"/>
</dbReference>
<dbReference type="Gene3D" id="1.20.1270.60">
    <property type="entry name" value="Arfaptin homology (AH) domain/BAR domain"/>
    <property type="match status" value="1"/>
</dbReference>
<dbReference type="Gene3D" id="1.10.555.10">
    <property type="entry name" value="Rho GTPase activation protein"/>
    <property type="match status" value="1"/>
</dbReference>
<dbReference type="InterPro" id="IPR027267">
    <property type="entry name" value="AH/BAR_dom_sf"/>
</dbReference>
<dbReference type="InterPro" id="IPR004148">
    <property type="entry name" value="BAR_dom"/>
</dbReference>
<dbReference type="InterPro" id="IPR047165">
    <property type="entry name" value="RHG17/44/SH3BP1-like"/>
</dbReference>
<dbReference type="InterPro" id="IPR008936">
    <property type="entry name" value="Rho_GTPase_activation_prot"/>
</dbReference>
<dbReference type="InterPro" id="IPR000198">
    <property type="entry name" value="RhoGAP_dom"/>
</dbReference>
<dbReference type="PANTHER" id="PTHR14130">
    <property type="entry name" value="3BP-1 RELATED RHOGAP"/>
    <property type="match status" value="1"/>
</dbReference>
<dbReference type="PANTHER" id="PTHR14130:SF13">
    <property type="entry name" value="RHO GTPASE-ACTIVATING PROTEIN 44"/>
    <property type="match status" value="1"/>
</dbReference>
<dbReference type="Pfam" id="PF03114">
    <property type="entry name" value="BAR"/>
    <property type="match status" value="1"/>
</dbReference>
<dbReference type="Pfam" id="PF00620">
    <property type="entry name" value="RhoGAP"/>
    <property type="match status" value="1"/>
</dbReference>
<dbReference type="SMART" id="SM00721">
    <property type="entry name" value="BAR"/>
    <property type="match status" value="1"/>
</dbReference>
<dbReference type="SMART" id="SM00324">
    <property type="entry name" value="RhoGAP"/>
    <property type="match status" value="1"/>
</dbReference>
<dbReference type="SUPFAM" id="SSF103657">
    <property type="entry name" value="BAR/IMD domain-like"/>
    <property type="match status" value="1"/>
</dbReference>
<dbReference type="SUPFAM" id="SSF48350">
    <property type="entry name" value="GTPase activation domain, GAP"/>
    <property type="match status" value="1"/>
</dbReference>
<dbReference type="PROSITE" id="PS51021">
    <property type="entry name" value="BAR"/>
    <property type="match status" value="1"/>
</dbReference>
<dbReference type="PROSITE" id="PS50238">
    <property type="entry name" value="RHOGAP"/>
    <property type="match status" value="1"/>
</dbReference>